<proteinExistence type="inferred from homology"/>
<dbReference type="EMBL" id="AY159349">
    <property type="protein sequence ID" value="AAO22227.1"/>
    <property type="molecule type" value="mRNA"/>
</dbReference>
<dbReference type="SMR" id="Q86QU4"/>
<dbReference type="GO" id="GO:0005576">
    <property type="term" value="C:extracellular region"/>
    <property type="evidence" value="ECO:0007669"/>
    <property type="project" value="UniProtKB-SubCell"/>
</dbReference>
<dbReference type="GO" id="GO:0019870">
    <property type="term" value="F:potassium channel inhibitor activity"/>
    <property type="evidence" value="ECO:0007669"/>
    <property type="project" value="InterPro"/>
</dbReference>
<dbReference type="GO" id="GO:0090729">
    <property type="term" value="F:toxin activity"/>
    <property type="evidence" value="ECO:0007669"/>
    <property type="project" value="UniProtKB-KW"/>
</dbReference>
<dbReference type="Gene3D" id="3.30.30.10">
    <property type="entry name" value="Knottin, scorpion toxin-like"/>
    <property type="match status" value="1"/>
</dbReference>
<dbReference type="InterPro" id="IPR012622">
    <property type="entry name" value="Ergtoxin"/>
</dbReference>
<dbReference type="InterPro" id="IPR036574">
    <property type="entry name" value="Scorpion_toxin-like_sf"/>
</dbReference>
<dbReference type="Pfam" id="PF08086">
    <property type="entry name" value="Toxin_17"/>
    <property type="match status" value="1"/>
</dbReference>
<dbReference type="SUPFAM" id="SSF57095">
    <property type="entry name" value="Scorpion toxin-like"/>
    <property type="match status" value="1"/>
</dbReference>
<dbReference type="PROSITE" id="PS60026">
    <property type="entry name" value="ERGTX"/>
    <property type="match status" value="1"/>
</dbReference>
<evidence type="ECO:0000250" key="1"/>
<evidence type="ECO:0000250" key="2">
    <source>
        <dbReference type="UniProtKB" id="P59940"/>
    </source>
</evidence>
<evidence type="ECO:0000250" key="3">
    <source>
        <dbReference type="UniProtKB" id="Q86QT3"/>
    </source>
</evidence>
<evidence type="ECO:0000250" key="4">
    <source>
        <dbReference type="UniProtKB" id="Q86QU9"/>
    </source>
</evidence>
<evidence type="ECO:0000303" key="5">
    <source>
    </source>
</evidence>
<evidence type="ECO:0000305" key="6"/>
<name>KGX49_CENSC</name>
<organism>
    <name type="scientific">Centruroides sculpturatus</name>
    <name type="common">Arizona bark scorpion</name>
    <dbReference type="NCBI Taxonomy" id="218467"/>
    <lineage>
        <taxon>Eukaryota</taxon>
        <taxon>Metazoa</taxon>
        <taxon>Ecdysozoa</taxon>
        <taxon>Arthropoda</taxon>
        <taxon>Chelicerata</taxon>
        <taxon>Arachnida</taxon>
        <taxon>Scorpiones</taxon>
        <taxon>Buthida</taxon>
        <taxon>Buthoidea</taxon>
        <taxon>Buthidae</taxon>
        <taxon>Centruroides</taxon>
    </lineage>
</organism>
<feature type="chain" id="PRO_0000066856" description="Potassium channel toxin gamma-KTx 4.9">
    <location>
        <begin position="1"/>
        <end position="43"/>
    </location>
</feature>
<feature type="disulfide bond" evidence="3">
    <location>
        <begin position="5"/>
        <end position="23"/>
    </location>
</feature>
<feature type="disulfide bond" evidence="3">
    <location>
        <begin position="11"/>
        <end position="34"/>
    </location>
</feature>
<feature type="disulfide bond" evidence="3">
    <location>
        <begin position="20"/>
        <end position="39"/>
    </location>
</feature>
<feature type="disulfide bond" evidence="3">
    <location>
        <begin position="24"/>
        <end position="41"/>
    </location>
</feature>
<protein>
    <recommendedName>
        <fullName evidence="5">Potassium channel toxin gamma-KTx 4.9</fullName>
    </recommendedName>
    <alternativeName>
        <fullName evidence="6">CsErgTx3</fullName>
        <shortName evidence="5">CsErg3</shortName>
        <shortName evidence="5">ErgTx3</shortName>
    </alternativeName>
    <alternativeName>
        <fullName evidence="5">Ergtoxin-like protein</fullName>
    </alternativeName>
</protein>
<comment type="function">
    <text evidence="2">Reversibly blocks Kv11/ERG potassium channels.</text>
</comment>
<comment type="subcellular location">
    <subcellularLocation>
        <location evidence="4">Secreted</location>
    </subcellularLocation>
</comment>
<comment type="tissue specificity">
    <text evidence="6">Expressed by the venom gland.</text>
</comment>
<comment type="domain">
    <text evidence="1">The presence of a 'disulfide through disulfide knot' structurally defines this protein as a knottin.</text>
</comment>
<comment type="domain">
    <text evidence="3">Has the CSalpha/beta fold, which comprises one or two short alpha helices connected to anti-parallel beta-sheets stabilized by three or four disulfide bonds.</text>
</comment>
<comment type="similarity">
    <text evidence="6">Belongs to the ergtoxin family. Gamma-KTx 4 subfamily.</text>
</comment>
<reference key="1">
    <citation type="journal article" date="2002" name="FEBS Lett.">
        <title>A large number of novel Ergtoxin-like genes and ERG K+-channels blocking peptides from scorpions of the genus Centruroides.</title>
        <authorList>
            <person name="Corona M."/>
            <person name="Gurrola G.B."/>
            <person name="Merino E."/>
            <person name="Cassulini R.R."/>
            <person name="Valdez-Cruz N.A."/>
            <person name="Garcia B."/>
            <person name="Ramirez-Dominguez M.E."/>
            <person name="Coronas F.I."/>
            <person name="Zamudio F.Z."/>
            <person name="Wanke E."/>
            <person name="Possani L.D."/>
        </authorList>
    </citation>
    <scope>NUCLEOTIDE SEQUENCE [MRNA]</scope>
    <scope>NOMENCLATURE</scope>
    <source>
        <tissue>Venom gland</tissue>
    </source>
</reference>
<accession>Q86QU4</accession>
<keyword id="KW-1015">Disulfide bond</keyword>
<keyword id="KW-0872">Ion channel impairing toxin</keyword>
<keyword id="KW-0960">Knottin</keyword>
<keyword id="KW-0528">Neurotoxin</keyword>
<keyword id="KW-0632">Potassium channel impairing toxin</keyword>
<keyword id="KW-0964">Secreted</keyword>
<keyword id="KW-0800">Toxin</keyword>
<keyword id="KW-1220">Voltage-gated potassium channel impairing toxin</keyword>
<sequence>DRDSCVDKSRCGKYGYYGQCDDCCKKAGDRAGTCVYYKCKCNP</sequence>